<gene>
    <name type="primary">Pcolce2</name>
    <name type="synonym">Pcpe2</name>
</gene>
<name>PCOC2_MOUSE</name>
<keyword id="KW-1015">Disulfide bond</keyword>
<keyword id="KW-0325">Glycoprotein</keyword>
<keyword id="KW-0358">Heparin-binding</keyword>
<keyword id="KW-1185">Reference proteome</keyword>
<keyword id="KW-0677">Repeat</keyword>
<keyword id="KW-0964">Secreted</keyword>
<keyword id="KW-0732">Signal</keyword>
<organism>
    <name type="scientific">Mus musculus</name>
    <name type="common">Mouse</name>
    <dbReference type="NCBI Taxonomy" id="10090"/>
    <lineage>
        <taxon>Eukaryota</taxon>
        <taxon>Metazoa</taxon>
        <taxon>Chordata</taxon>
        <taxon>Craniata</taxon>
        <taxon>Vertebrata</taxon>
        <taxon>Euteleostomi</taxon>
        <taxon>Mammalia</taxon>
        <taxon>Eutheria</taxon>
        <taxon>Euarchontoglires</taxon>
        <taxon>Glires</taxon>
        <taxon>Rodentia</taxon>
        <taxon>Myomorpha</taxon>
        <taxon>Muroidea</taxon>
        <taxon>Muridae</taxon>
        <taxon>Murinae</taxon>
        <taxon>Mus</taxon>
        <taxon>Mus</taxon>
    </lineage>
</organism>
<comment type="function">
    <text evidence="1">Binds to the C-terminal propeptide of types I and II procollagens and may enhance the cleavage of that propeptide by BMP1.</text>
</comment>
<comment type="subunit">
    <text evidence="1">Interacts with heparin with high affinity, and type I or II collagen.</text>
</comment>
<comment type="subcellular location">
    <subcellularLocation>
        <location evidence="7">Secreted</location>
    </subcellularLocation>
</comment>
<comment type="developmental stage">
    <text evidence="6">Expressed at all stages of development, with expression level decreasing from 7 to 11 dpc and more abundant levels of expression at 15 and 17 dpc. First detectable at relatively low level at 10.5 dpc in the area of the third and fourth branchial arches. At 13.5 dpc easily discernible expression seems primarily confined to the cartilage primordia of future bones. At 15.5 dpc expressed at the highest levels in skeletal elements in the interior non-ossified regions of cartilaginous structures and excluded from regions of ossification.</text>
</comment>
<comment type="PTM">
    <text evidence="1">O-glycosylated; contains sialic acid.</text>
</comment>
<feature type="signal peptide" evidence="3">
    <location>
        <begin position="1"/>
        <end position="22"/>
    </location>
</feature>
<feature type="chain" id="PRO_0000022021" description="Procollagen C-endopeptidase enhancer 2">
    <location>
        <begin position="23"/>
        <end position="414"/>
    </location>
</feature>
<feature type="domain" description="CUB 1" evidence="4">
    <location>
        <begin position="32"/>
        <end position="143"/>
    </location>
</feature>
<feature type="domain" description="CUB 2" evidence="4">
    <location>
        <begin position="153"/>
        <end position="267"/>
    </location>
</feature>
<feature type="domain" description="NTR" evidence="5">
    <location>
        <begin position="296"/>
        <end position="414"/>
    </location>
</feature>
<feature type="glycosylation site" description="N-linked (GlcNAc...) asparagine" evidence="3">
    <location>
        <position position="354"/>
    </location>
</feature>
<feature type="disulfide bond" evidence="4">
    <location>
        <begin position="32"/>
        <end position="58"/>
    </location>
</feature>
<feature type="disulfide bond" evidence="4">
    <location>
        <begin position="85"/>
        <end position="106"/>
    </location>
</feature>
<feature type="disulfide bond" evidence="4">
    <location>
        <begin position="153"/>
        <end position="180"/>
    </location>
</feature>
<feature type="disulfide bond" evidence="4">
    <location>
        <begin position="207"/>
        <end position="230"/>
    </location>
</feature>
<feature type="disulfide bond" evidence="2">
    <location>
        <begin position="296"/>
        <end position="363"/>
    </location>
</feature>
<feature type="disulfide bond" evidence="2">
    <location>
        <begin position="300"/>
        <end position="366"/>
    </location>
</feature>
<feature type="disulfide bond" evidence="2">
    <location>
        <begin position="311"/>
        <end position="414"/>
    </location>
</feature>
<feature type="sequence conflict" description="In Ref. 1; AAL83947." evidence="7" ref="1">
    <original>P</original>
    <variation>S</variation>
    <location>
        <position position="167"/>
    </location>
</feature>
<accession>Q8R4W6</accession>
<accession>Q3V1K6</accession>
<accession>Q9CX06</accession>
<sequence length="414" mass="45408">MGGASACIPLCLLLATARMARPQTPERPVFTCGGILTGESGFIGSEGFPGMYPPNSKCTWKITVPEGKVVVLNFRFIDLENDNLCRYDFVDVYNGHANGQRIGRFCGTFRPGSLVASGNKMTVQMISDANTAGSGFMATYSAAAPDGKGDRYCGGRLEKPSGTFKTPNWPDRDYPVGVTCVWHIIAPKNQLIELKFEKFDVERDNYCRYDYVAVFNGGEVNDAKRIGKYCGDSPPVPIVSERNELLIQFLSDLSLTADGFIGHYKFRPKKFPTTTTTPVTTTLPVTTGLKPTVALCQQKCRRMGTLESNYCSSNFVLAGTVITTVTRGGSLHATVSIISIYREGNLAIQQAGKNMSVKLTVVCRQCPLLRRGLNYIIMGQVGEDGRGKIMPNSFVKMFKNKNQKPMNALKNKQC</sequence>
<evidence type="ECO:0000250" key="1"/>
<evidence type="ECO:0000250" key="2">
    <source>
        <dbReference type="UniProtKB" id="Q15113"/>
    </source>
</evidence>
<evidence type="ECO:0000255" key="3"/>
<evidence type="ECO:0000255" key="4">
    <source>
        <dbReference type="PROSITE-ProRule" id="PRU00059"/>
    </source>
</evidence>
<evidence type="ECO:0000255" key="5">
    <source>
        <dbReference type="PROSITE-ProRule" id="PRU00295"/>
    </source>
</evidence>
<evidence type="ECO:0000269" key="6">
    <source>
    </source>
</evidence>
<evidence type="ECO:0000305" key="7"/>
<protein>
    <recommendedName>
        <fullName>Procollagen C-endopeptidase enhancer 2</fullName>
    </recommendedName>
    <alternativeName>
        <fullName>Procollagen COOH-terminal proteinase enhancer 2</fullName>
        <shortName>PCPE-2</shortName>
        <shortName>Procollagen C-proteinase enhancer 2</shortName>
    </alternativeName>
</protein>
<reference key="1">
    <citation type="journal article" date="2002" name="J. Biol. Chem.">
        <title>PCOLCE2 encodes a functional procollagen C-proteinase enhancer (PCPE2) that is a collagen-binding protein differing in distribution of expression and post-translational modification from the previously described PCPE1.</title>
        <authorList>
            <person name="Steiglitz B.M."/>
            <person name="Keene D.R."/>
            <person name="Greenspan D.S."/>
        </authorList>
    </citation>
    <scope>NUCLEOTIDE SEQUENCE [MRNA]</scope>
    <scope>DEVELOPMENTAL STAGE</scope>
    <source>
        <strain>BALB/cJ</strain>
    </source>
</reference>
<reference key="2">
    <citation type="journal article" date="2005" name="Science">
        <title>The transcriptional landscape of the mammalian genome.</title>
        <authorList>
            <person name="Carninci P."/>
            <person name="Kasukawa T."/>
            <person name="Katayama S."/>
            <person name="Gough J."/>
            <person name="Frith M.C."/>
            <person name="Maeda N."/>
            <person name="Oyama R."/>
            <person name="Ravasi T."/>
            <person name="Lenhard B."/>
            <person name="Wells C."/>
            <person name="Kodzius R."/>
            <person name="Shimokawa K."/>
            <person name="Bajic V.B."/>
            <person name="Brenner S.E."/>
            <person name="Batalov S."/>
            <person name="Forrest A.R."/>
            <person name="Zavolan M."/>
            <person name="Davis M.J."/>
            <person name="Wilming L.G."/>
            <person name="Aidinis V."/>
            <person name="Allen J.E."/>
            <person name="Ambesi-Impiombato A."/>
            <person name="Apweiler R."/>
            <person name="Aturaliya R.N."/>
            <person name="Bailey T.L."/>
            <person name="Bansal M."/>
            <person name="Baxter L."/>
            <person name="Beisel K.W."/>
            <person name="Bersano T."/>
            <person name="Bono H."/>
            <person name="Chalk A.M."/>
            <person name="Chiu K.P."/>
            <person name="Choudhary V."/>
            <person name="Christoffels A."/>
            <person name="Clutterbuck D.R."/>
            <person name="Crowe M.L."/>
            <person name="Dalla E."/>
            <person name="Dalrymple B.P."/>
            <person name="de Bono B."/>
            <person name="Della Gatta G."/>
            <person name="di Bernardo D."/>
            <person name="Down T."/>
            <person name="Engstrom P."/>
            <person name="Fagiolini M."/>
            <person name="Faulkner G."/>
            <person name="Fletcher C.F."/>
            <person name="Fukushima T."/>
            <person name="Furuno M."/>
            <person name="Futaki S."/>
            <person name="Gariboldi M."/>
            <person name="Georgii-Hemming P."/>
            <person name="Gingeras T.R."/>
            <person name="Gojobori T."/>
            <person name="Green R.E."/>
            <person name="Gustincich S."/>
            <person name="Harbers M."/>
            <person name="Hayashi Y."/>
            <person name="Hensch T.K."/>
            <person name="Hirokawa N."/>
            <person name="Hill D."/>
            <person name="Huminiecki L."/>
            <person name="Iacono M."/>
            <person name="Ikeo K."/>
            <person name="Iwama A."/>
            <person name="Ishikawa T."/>
            <person name="Jakt M."/>
            <person name="Kanapin A."/>
            <person name="Katoh M."/>
            <person name="Kawasawa Y."/>
            <person name="Kelso J."/>
            <person name="Kitamura H."/>
            <person name="Kitano H."/>
            <person name="Kollias G."/>
            <person name="Krishnan S.P."/>
            <person name="Kruger A."/>
            <person name="Kummerfeld S.K."/>
            <person name="Kurochkin I.V."/>
            <person name="Lareau L.F."/>
            <person name="Lazarevic D."/>
            <person name="Lipovich L."/>
            <person name="Liu J."/>
            <person name="Liuni S."/>
            <person name="McWilliam S."/>
            <person name="Madan Babu M."/>
            <person name="Madera M."/>
            <person name="Marchionni L."/>
            <person name="Matsuda H."/>
            <person name="Matsuzawa S."/>
            <person name="Miki H."/>
            <person name="Mignone F."/>
            <person name="Miyake S."/>
            <person name="Morris K."/>
            <person name="Mottagui-Tabar S."/>
            <person name="Mulder N."/>
            <person name="Nakano N."/>
            <person name="Nakauchi H."/>
            <person name="Ng P."/>
            <person name="Nilsson R."/>
            <person name="Nishiguchi S."/>
            <person name="Nishikawa S."/>
            <person name="Nori F."/>
            <person name="Ohara O."/>
            <person name="Okazaki Y."/>
            <person name="Orlando V."/>
            <person name="Pang K.C."/>
            <person name="Pavan W.J."/>
            <person name="Pavesi G."/>
            <person name="Pesole G."/>
            <person name="Petrovsky N."/>
            <person name="Piazza S."/>
            <person name="Reed J."/>
            <person name="Reid J.F."/>
            <person name="Ring B.Z."/>
            <person name="Ringwald M."/>
            <person name="Rost B."/>
            <person name="Ruan Y."/>
            <person name="Salzberg S.L."/>
            <person name="Sandelin A."/>
            <person name="Schneider C."/>
            <person name="Schoenbach C."/>
            <person name="Sekiguchi K."/>
            <person name="Semple C.A."/>
            <person name="Seno S."/>
            <person name="Sessa L."/>
            <person name="Sheng Y."/>
            <person name="Shibata Y."/>
            <person name="Shimada H."/>
            <person name="Shimada K."/>
            <person name="Silva D."/>
            <person name="Sinclair B."/>
            <person name="Sperling S."/>
            <person name="Stupka E."/>
            <person name="Sugiura K."/>
            <person name="Sultana R."/>
            <person name="Takenaka Y."/>
            <person name="Taki K."/>
            <person name="Tammoja K."/>
            <person name="Tan S.L."/>
            <person name="Tang S."/>
            <person name="Taylor M.S."/>
            <person name="Tegner J."/>
            <person name="Teichmann S.A."/>
            <person name="Ueda H.R."/>
            <person name="van Nimwegen E."/>
            <person name="Verardo R."/>
            <person name="Wei C.L."/>
            <person name="Yagi K."/>
            <person name="Yamanishi H."/>
            <person name="Zabarovsky E."/>
            <person name="Zhu S."/>
            <person name="Zimmer A."/>
            <person name="Hide W."/>
            <person name="Bult C."/>
            <person name="Grimmond S.M."/>
            <person name="Teasdale R.D."/>
            <person name="Liu E.T."/>
            <person name="Brusic V."/>
            <person name="Quackenbush J."/>
            <person name="Wahlestedt C."/>
            <person name="Mattick J.S."/>
            <person name="Hume D.A."/>
            <person name="Kai C."/>
            <person name="Sasaki D."/>
            <person name="Tomaru Y."/>
            <person name="Fukuda S."/>
            <person name="Kanamori-Katayama M."/>
            <person name="Suzuki M."/>
            <person name="Aoki J."/>
            <person name="Arakawa T."/>
            <person name="Iida J."/>
            <person name="Imamura K."/>
            <person name="Itoh M."/>
            <person name="Kato T."/>
            <person name="Kawaji H."/>
            <person name="Kawagashira N."/>
            <person name="Kawashima T."/>
            <person name="Kojima M."/>
            <person name="Kondo S."/>
            <person name="Konno H."/>
            <person name="Nakano K."/>
            <person name="Ninomiya N."/>
            <person name="Nishio T."/>
            <person name="Okada M."/>
            <person name="Plessy C."/>
            <person name="Shibata K."/>
            <person name="Shiraki T."/>
            <person name="Suzuki S."/>
            <person name="Tagami M."/>
            <person name="Waki K."/>
            <person name="Watahiki A."/>
            <person name="Okamura-Oho Y."/>
            <person name="Suzuki H."/>
            <person name="Kawai J."/>
            <person name="Hayashizaki Y."/>
        </authorList>
    </citation>
    <scope>NUCLEOTIDE SEQUENCE [LARGE SCALE MRNA]</scope>
    <source>
        <strain>C57BL/6J</strain>
        <tissue>Mammary gland</tissue>
    </source>
</reference>
<reference key="3">
    <citation type="journal article" date="2004" name="Genome Res.">
        <title>The status, quality, and expansion of the NIH full-length cDNA project: the Mammalian Gene Collection (MGC).</title>
        <authorList>
            <consortium name="The MGC Project Team"/>
        </authorList>
    </citation>
    <scope>NUCLEOTIDE SEQUENCE [LARGE SCALE MRNA]</scope>
    <source>
        <tissue>Olfactory epithelium</tissue>
    </source>
</reference>
<dbReference type="EMBL" id="AF352788">
    <property type="protein sequence ID" value="AAL83947.1"/>
    <property type="molecule type" value="mRNA"/>
</dbReference>
<dbReference type="EMBL" id="AK010249">
    <property type="protein sequence ID" value="BAB26794.1"/>
    <property type="molecule type" value="mRNA"/>
</dbReference>
<dbReference type="EMBL" id="AK132395">
    <property type="protein sequence ID" value="BAE21144.1"/>
    <property type="molecule type" value="mRNA"/>
</dbReference>
<dbReference type="EMBL" id="BC051174">
    <property type="protein sequence ID" value="AAH51174.1"/>
    <property type="molecule type" value="mRNA"/>
</dbReference>
<dbReference type="CCDS" id="CCDS23410.1"/>
<dbReference type="RefSeq" id="NP_083896.1">
    <property type="nucleotide sequence ID" value="NM_029620.2"/>
</dbReference>
<dbReference type="SMR" id="Q8R4W6"/>
<dbReference type="FunCoup" id="Q8R4W6">
    <property type="interactions" value="99"/>
</dbReference>
<dbReference type="STRING" id="10090.ENSMUSP00000015498"/>
<dbReference type="GlyCosmos" id="Q8R4W6">
    <property type="glycosylation" value="1 site, No reported glycans"/>
</dbReference>
<dbReference type="GlyGen" id="Q8R4W6">
    <property type="glycosylation" value="1 site"/>
</dbReference>
<dbReference type="PhosphoSitePlus" id="Q8R4W6"/>
<dbReference type="jPOST" id="Q8R4W6"/>
<dbReference type="PaxDb" id="10090-ENSMUSP00000015498"/>
<dbReference type="PeptideAtlas" id="Q8R4W6"/>
<dbReference type="ProteomicsDB" id="288077"/>
<dbReference type="Antibodypedia" id="2145">
    <property type="antibodies" value="155 antibodies from 22 providers"/>
</dbReference>
<dbReference type="DNASU" id="76477"/>
<dbReference type="Ensembl" id="ENSMUST00000015498.9">
    <property type="protein sequence ID" value="ENSMUSP00000015498.9"/>
    <property type="gene ID" value="ENSMUSG00000015354.9"/>
</dbReference>
<dbReference type="GeneID" id="76477"/>
<dbReference type="KEGG" id="mmu:76477"/>
<dbReference type="UCSC" id="uc009rbg.1">
    <property type="organism name" value="mouse"/>
</dbReference>
<dbReference type="AGR" id="MGI:1923727"/>
<dbReference type="CTD" id="26577"/>
<dbReference type="MGI" id="MGI:1923727">
    <property type="gene designation" value="Pcolce2"/>
</dbReference>
<dbReference type="VEuPathDB" id="HostDB:ENSMUSG00000015354"/>
<dbReference type="eggNOG" id="ENOG502QRMG">
    <property type="taxonomic scope" value="Eukaryota"/>
</dbReference>
<dbReference type="GeneTree" id="ENSGT00940000157649"/>
<dbReference type="HOGENOM" id="CLU_034096_0_0_1"/>
<dbReference type="InParanoid" id="Q8R4W6"/>
<dbReference type="OMA" id="DVYNGHV"/>
<dbReference type="OrthoDB" id="6116165at2759"/>
<dbReference type="PhylomeDB" id="Q8R4W6"/>
<dbReference type="TreeFam" id="TF316506"/>
<dbReference type="Reactome" id="R-MMU-1650814">
    <property type="pathway name" value="Collagen biosynthesis and modifying enzymes"/>
</dbReference>
<dbReference type="BioGRID-ORCS" id="76477">
    <property type="hits" value="4 hits in 78 CRISPR screens"/>
</dbReference>
<dbReference type="ChiTaRS" id="Pcolce2">
    <property type="organism name" value="mouse"/>
</dbReference>
<dbReference type="PRO" id="PR:Q8R4W6"/>
<dbReference type="Proteomes" id="UP000000589">
    <property type="component" value="Chromosome 9"/>
</dbReference>
<dbReference type="RNAct" id="Q8R4W6">
    <property type="molecule type" value="protein"/>
</dbReference>
<dbReference type="Bgee" id="ENSMUSG00000015354">
    <property type="expression patterns" value="Expressed in humerus cartilage element and 197 other cell types or tissues"/>
</dbReference>
<dbReference type="GO" id="GO:0062023">
    <property type="term" value="C:collagen-containing extracellular matrix"/>
    <property type="evidence" value="ECO:0007005"/>
    <property type="project" value="BHF-UCL"/>
</dbReference>
<dbReference type="GO" id="GO:0005576">
    <property type="term" value="C:extracellular region"/>
    <property type="evidence" value="ECO:0007669"/>
    <property type="project" value="UniProtKB-SubCell"/>
</dbReference>
<dbReference type="GO" id="GO:0005518">
    <property type="term" value="F:collagen binding"/>
    <property type="evidence" value="ECO:0000266"/>
    <property type="project" value="MGI"/>
</dbReference>
<dbReference type="GO" id="GO:0008201">
    <property type="term" value="F:heparin binding"/>
    <property type="evidence" value="ECO:0000266"/>
    <property type="project" value="MGI"/>
</dbReference>
<dbReference type="GO" id="GO:0016504">
    <property type="term" value="F:peptidase activator activity"/>
    <property type="evidence" value="ECO:0000266"/>
    <property type="project" value="MGI"/>
</dbReference>
<dbReference type="GO" id="GO:1990830">
    <property type="term" value="P:cellular response to leukemia inhibitory factor"/>
    <property type="evidence" value="ECO:0000270"/>
    <property type="project" value="MGI"/>
</dbReference>
<dbReference type="CDD" id="cd00041">
    <property type="entry name" value="CUB"/>
    <property type="match status" value="2"/>
</dbReference>
<dbReference type="CDD" id="cd03576">
    <property type="entry name" value="NTR_PCOLCE"/>
    <property type="match status" value="1"/>
</dbReference>
<dbReference type="FunFam" id="2.60.120.290:FF:000005">
    <property type="entry name" value="Procollagen C-endopeptidase enhancer 1"/>
    <property type="match status" value="1"/>
</dbReference>
<dbReference type="FunFam" id="2.40.50.120:FF:000015">
    <property type="entry name" value="Procollagen C-endopeptidase enhancer 2"/>
    <property type="match status" value="1"/>
</dbReference>
<dbReference type="FunFam" id="2.60.120.290:FF:000026">
    <property type="entry name" value="Procollagen C-endopeptidase enhancer 2"/>
    <property type="match status" value="1"/>
</dbReference>
<dbReference type="Gene3D" id="2.40.50.120">
    <property type="match status" value="1"/>
</dbReference>
<dbReference type="Gene3D" id="2.60.120.290">
    <property type="entry name" value="Spermadhesin, CUB domain"/>
    <property type="match status" value="2"/>
</dbReference>
<dbReference type="InterPro" id="IPR000859">
    <property type="entry name" value="CUB_dom"/>
</dbReference>
<dbReference type="InterPro" id="IPR001134">
    <property type="entry name" value="Netrin_domain"/>
</dbReference>
<dbReference type="InterPro" id="IPR018933">
    <property type="entry name" value="Netrin_module_non-TIMP"/>
</dbReference>
<dbReference type="InterPro" id="IPR035814">
    <property type="entry name" value="NTR_PCOLCE"/>
</dbReference>
<dbReference type="InterPro" id="IPR035914">
    <property type="entry name" value="Sperma_CUB_dom_sf"/>
</dbReference>
<dbReference type="InterPro" id="IPR008993">
    <property type="entry name" value="TIMP-like_OB-fold"/>
</dbReference>
<dbReference type="PANTHER" id="PTHR24251">
    <property type="entry name" value="OVOCHYMASE-RELATED"/>
    <property type="match status" value="1"/>
</dbReference>
<dbReference type="PANTHER" id="PTHR24251:SF31">
    <property type="entry name" value="PROCOLLAGEN C-ENDOPEPTIDASE ENHANCER 2"/>
    <property type="match status" value="1"/>
</dbReference>
<dbReference type="Pfam" id="PF00431">
    <property type="entry name" value="CUB"/>
    <property type="match status" value="2"/>
</dbReference>
<dbReference type="Pfam" id="PF01759">
    <property type="entry name" value="NTR"/>
    <property type="match status" value="1"/>
</dbReference>
<dbReference type="SMART" id="SM00643">
    <property type="entry name" value="C345C"/>
    <property type="match status" value="1"/>
</dbReference>
<dbReference type="SMART" id="SM00042">
    <property type="entry name" value="CUB"/>
    <property type="match status" value="2"/>
</dbReference>
<dbReference type="SUPFAM" id="SSF49854">
    <property type="entry name" value="Spermadhesin, CUB domain"/>
    <property type="match status" value="2"/>
</dbReference>
<dbReference type="SUPFAM" id="SSF50242">
    <property type="entry name" value="TIMP-like"/>
    <property type="match status" value="1"/>
</dbReference>
<dbReference type="PROSITE" id="PS01180">
    <property type="entry name" value="CUB"/>
    <property type="match status" value="2"/>
</dbReference>
<dbReference type="PROSITE" id="PS50189">
    <property type="entry name" value="NTR"/>
    <property type="match status" value="1"/>
</dbReference>
<proteinExistence type="evidence at transcript level"/>